<organism>
    <name type="scientific">Rhodobacter capsulatus</name>
    <name type="common">Rhodopseudomonas capsulata</name>
    <dbReference type="NCBI Taxonomy" id="1061"/>
    <lineage>
        <taxon>Bacteria</taxon>
        <taxon>Pseudomonadati</taxon>
        <taxon>Pseudomonadota</taxon>
        <taxon>Alphaproteobacteria</taxon>
        <taxon>Rhodobacterales</taxon>
        <taxon>Rhodobacter group</taxon>
        <taxon>Rhodobacter</taxon>
    </lineage>
</organism>
<keyword id="KW-0472">Membrane</keyword>
<keyword id="KW-0520">NAD</keyword>
<keyword id="KW-0874">Quinone</keyword>
<keyword id="KW-1278">Translocase</keyword>
<keyword id="KW-0812">Transmembrane</keyword>
<keyword id="KW-1133">Transmembrane helix</keyword>
<keyword id="KW-0813">Transport</keyword>
<keyword id="KW-0830">Ubiquinone</keyword>
<dbReference type="EC" id="7.1.1.-" evidence="1"/>
<dbReference type="EMBL" id="AF029365">
    <property type="protein sequence ID" value="AAC25002.1"/>
    <property type="molecule type" value="Genomic_DNA"/>
</dbReference>
<dbReference type="RefSeq" id="WP_013067258.1">
    <property type="nucleotide sequence ID" value="NZ_VIBE01000008.1"/>
</dbReference>
<dbReference type="SMR" id="P50940"/>
<dbReference type="GeneID" id="31490414"/>
<dbReference type="OMA" id="IPMEHGL"/>
<dbReference type="OrthoDB" id="9811124at2"/>
<dbReference type="GO" id="GO:0030964">
    <property type="term" value="C:NADH dehydrogenase complex"/>
    <property type="evidence" value="ECO:0007669"/>
    <property type="project" value="TreeGrafter"/>
</dbReference>
<dbReference type="GO" id="GO:0005886">
    <property type="term" value="C:plasma membrane"/>
    <property type="evidence" value="ECO:0007669"/>
    <property type="project" value="UniProtKB-UniRule"/>
</dbReference>
<dbReference type="GO" id="GO:0042717">
    <property type="term" value="C:plasma membrane-derived chromatophore membrane"/>
    <property type="evidence" value="ECO:0007669"/>
    <property type="project" value="UniProtKB-SubCell"/>
</dbReference>
<dbReference type="GO" id="GO:0050136">
    <property type="term" value="F:NADH:ubiquinone reductase (non-electrogenic) activity"/>
    <property type="evidence" value="ECO:0007669"/>
    <property type="project" value="UniProtKB-UniRule"/>
</dbReference>
<dbReference type="GO" id="GO:0048038">
    <property type="term" value="F:quinone binding"/>
    <property type="evidence" value="ECO:0007669"/>
    <property type="project" value="UniProtKB-KW"/>
</dbReference>
<dbReference type="GO" id="GO:0042773">
    <property type="term" value="P:ATP synthesis coupled electron transport"/>
    <property type="evidence" value="ECO:0007669"/>
    <property type="project" value="InterPro"/>
</dbReference>
<dbReference type="FunFam" id="1.10.287.3510:FF:000001">
    <property type="entry name" value="NADH-quinone oxidoreductase subunit K"/>
    <property type="match status" value="1"/>
</dbReference>
<dbReference type="Gene3D" id="1.10.287.3510">
    <property type="match status" value="1"/>
</dbReference>
<dbReference type="HAMAP" id="MF_01456">
    <property type="entry name" value="NDH1_NuoK"/>
    <property type="match status" value="1"/>
</dbReference>
<dbReference type="InterPro" id="IPR001133">
    <property type="entry name" value="NADH_UbQ_OxRdtase_chain4L/K"/>
</dbReference>
<dbReference type="InterPro" id="IPR039428">
    <property type="entry name" value="NUOK/Mnh_C1-like"/>
</dbReference>
<dbReference type="NCBIfam" id="NF004320">
    <property type="entry name" value="PRK05715.1-2"/>
    <property type="match status" value="1"/>
</dbReference>
<dbReference type="NCBIfam" id="NF004321">
    <property type="entry name" value="PRK05715.1-3"/>
    <property type="match status" value="1"/>
</dbReference>
<dbReference type="NCBIfam" id="NF004323">
    <property type="entry name" value="PRK05715.1-5"/>
    <property type="match status" value="1"/>
</dbReference>
<dbReference type="PANTHER" id="PTHR11434:SF21">
    <property type="entry name" value="NADH DEHYDROGENASE SUBUNIT 4L-RELATED"/>
    <property type="match status" value="1"/>
</dbReference>
<dbReference type="PANTHER" id="PTHR11434">
    <property type="entry name" value="NADH-UBIQUINONE OXIDOREDUCTASE SUBUNIT ND4L"/>
    <property type="match status" value="1"/>
</dbReference>
<dbReference type="Pfam" id="PF00420">
    <property type="entry name" value="Oxidored_q2"/>
    <property type="match status" value="1"/>
</dbReference>
<proteinExistence type="inferred from homology"/>
<accession>P50940</accession>
<reference key="1">
    <citation type="journal article" date="1995" name="Gene">
        <title>Identification of five Rhodobacter capsulatus genes encoding the equivalent of ND subunits of the mitochondrial NADH-ubiquinone oxidoreductase.</title>
        <authorList>
            <person name="Dupuis A."/>
            <person name="Peinnequin A."/>
            <person name="Chevallet M."/>
            <person name="Lunardi J."/>
            <person name="Darrouzet E."/>
            <person name="Pierrard B."/>
            <person name="Procaccio V."/>
            <person name="Issartel J.P."/>
        </authorList>
    </citation>
    <scope>NUCLEOTIDE SEQUENCE [GENOMIC DNA]</scope>
    <source>
        <strain>ATCC 33303 / B10</strain>
    </source>
</reference>
<reference key="2">
    <citation type="journal article" date="1998" name="Mol. Microbiol.">
        <title>Distal genes of the nuo operon of Rhodobacter capsulatus equivalent to the mitochondrial ND subunits are all essential for the biogenesis of the respiratory NADH-ubiquinone oxidoreductase.</title>
        <authorList>
            <person name="Dupuis A."/>
            <person name="Darrouzet E."/>
            <person name="Duborjal H."/>
            <person name="Pierrard B."/>
            <person name="Chevallet M."/>
            <person name="van Belzen R."/>
            <person name="Albracht S.P.J."/>
            <person name="Lunardi J."/>
        </authorList>
    </citation>
    <scope>SUBCELLULAR LOCATION IN CHROMATOPHORE</scope>
    <scope>DISRUPTION PHENOTYPE</scope>
    <source>
        <strain>ATCC 33303 / B10</strain>
    </source>
</reference>
<sequence>MTIGLEHYLAVAAILFVTGIFGIFVNRKNVIVILMSIELMLLAVNINMVAFSTHLGDLVGQVFTMFVLTVAAAEAAIGLAILVVFFRNRGTIAVEDVNVMKG</sequence>
<protein>
    <recommendedName>
        <fullName evidence="1">NADH-quinone oxidoreductase subunit K</fullName>
        <ecNumber evidence="1">7.1.1.-</ecNumber>
    </recommendedName>
    <alternativeName>
        <fullName evidence="1">NADH dehydrogenase I subunit K</fullName>
    </alternativeName>
    <alternativeName>
        <fullName evidence="1">NDH-1 subunit K</fullName>
    </alternativeName>
</protein>
<evidence type="ECO:0000255" key="1">
    <source>
        <dbReference type="HAMAP-Rule" id="MF_01456"/>
    </source>
</evidence>
<evidence type="ECO:0000269" key="2">
    <source>
    </source>
</evidence>
<evidence type="ECO:0000305" key="3"/>
<comment type="function">
    <text>NDH-1 shuttles electrons from NADH, via FMN and iron-sulfur (Fe-S) centers, to quinones in the respiratory chain. The immediate electron acceptor for the enzyme in this species is believed to be ubiquinone. Couples the redox reaction to proton translocation (for every two electrons transferred, four hydrogen ions are translocated across the cytoplasmic membrane), and thus conserves the redox energy in a proton gradient.</text>
</comment>
<comment type="catalytic activity">
    <reaction evidence="1">
        <text>a quinone + NADH + 5 H(+)(in) = a quinol + NAD(+) + 4 H(+)(out)</text>
        <dbReference type="Rhea" id="RHEA:57888"/>
        <dbReference type="ChEBI" id="CHEBI:15378"/>
        <dbReference type="ChEBI" id="CHEBI:24646"/>
        <dbReference type="ChEBI" id="CHEBI:57540"/>
        <dbReference type="ChEBI" id="CHEBI:57945"/>
        <dbReference type="ChEBI" id="CHEBI:132124"/>
    </reaction>
</comment>
<comment type="subunit">
    <text evidence="3">NDH-1 is composed of 14 different subunits. Subunits NuoA, H, J, K, L, M, N constitute the membrane sector of the complex (Probable).</text>
</comment>
<comment type="subcellular location">
    <subcellularLocation>
        <location evidence="2">Cellular chromatophore membrane</location>
        <topology evidence="1 2">Multi-pass membrane protein</topology>
    </subcellularLocation>
</comment>
<comment type="disruption phenotype">
    <text evidence="2">No functional NADH-quinone oxidoreductase complex. Cells lacking this gene have a nearly normal respiratory growth phenotype on lactate, however they are unable to perform anaerobic photosynthesis. It is suggested that in R.capsulatus this complex may function in reverse flow under physiological conditions.</text>
</comment>
<comment type="similarity">
    <text evidence="1">Belongs to the complex I subunit 4L family.</text>
</comment>
<name>NUOK_RHOCA</name>
<gene>
    <name evidence="1" type="primary">nuoK</name>
</gene>
<feature type="chain" id="PRO_0000118533" description="NADH-quinone oxidoreductase subunit K">
    <location>
        <begin position="1"/>
        <end position="102"/>
    </location>
</feature>
<feature type="transmembrane region" description="Helical" evidence="1">
    <location>
        <begin position="5"/>
        <end position="25"/>
    </location>
</feature>
<feature type="transmembrane region" description="Helical" evidence="1">
    <location>
        <begin position="31"/>
        <end position="51"/>
    </location>
</feature>
<feature type="transmembrane region" description="Helical" evidence="1">
    <location>
        <begin position="66"/>
        <end position="86"/>
    </location>
</feature>